<organism>
    <name type="scientific">Actinobacillus pleuropneumoniae</name>
    <name type="common">Haemophilus pleuropneumoniae</name>
    <dbReference type="NCBI Taxonomy" id="715"/>
    <lineage>
        <taxon>Bacteria</taxon>
        <taxon>Pseudomonadati</taxon>
        <taxon>Pseudomonadota</taxon>
        <taxon>Gammaproteobacteria</taxon>
        <taxon>Pasteurellales</taxon>
        <taxon>Pasteurellaceae</taxon>
        <taxon>Actinobacillus</taxon>
    </lineage>
</organism>
<proteinExistence type="inferred from homology"/>
<sequence>MMLKNDFNVLGQIAWLWANSPMHRNWSVSLLMKNVIPAIENDQYLLLVDDGFPIAYCSWAKLTLESEARYVKDTNSLKIDDWNAGDRIWIIDWIAPFGDSSLLYKHMRQRFPYDIGRAIRIYPSKKDTGKIIYLKGGKITKKVAEKTFLQYEQELITALQ</sequence>
<dbReference type="EC" id="2.3.1.-" evidence="1"/>
<dbReference type="EMBL" id="M30602">
    <property type="protein sequence ID" value="AAA87231.1"/>
    <property type="molecule type" value="Genomic_DNA"/>
</dbReference>
<dbReference type="EMBL" id="X61111">
    <property type="protein sequence ID" value="CAA43422.1"/>
    <property type="status" value="ALT_INIT"/>
    <property type="molecule type" value="Genomic_DNA"/>
</dbReference>
<dbReference type="PIR" id="A33389">
    <property type="entry name" value="A33389"/>
</dbReference>
<dbReference type="PIR" id="S18852">
    <property type="entry name" value="A43599"/>
</dbReference>
<dbReference type="RefSeq" id="WP_012263032.1">
    <property type="nucleotide sequence ID" value="NZ_UIFY01000002.1"/>
</dbReference>
<dbReference type="SMR" id="P0A3I3"/>
<dbReference type="GeneID" id="48599184"/>
<dbReference type="OMA" id="WLWMHSP"/>
<dbReference type="OrthoDB" id="8596436at2"/>
<dbReference type="GO" id="GO:0005737">
    <property type="term" value="C:cytoplasm"/>
    <property type="evidence" value="ECO:0007669"/>
    <property type="project" value="UniProtKB-SubCell"/>
</dbReference>
<dbReference type="GO" id="GO:0016746">
    <property type="term" value="F:acyltransferase activity"/>
    <property type="evidence" value="ECO:0007669"/>
    <property type="project" value="UniProtKB-KW"/>
</dbReference>
<dbReference type="GO" id="GO:0031640">
    <property type="term" value="P:killing of cells of another organism"/>
    <property type="evidence" value="ECO:0007669"/>
    <property type="project" value="UniProtKB-KW"/>
</dbReference>
<dbReference type="GO" id="GO:0009404">
    <property type="term" value="P:toxin metabolic process"/>
    <property type="evidence" value="ECO:0007669"/>
    <property type="project" value="InterPro"/>
</dbReference>
<dbReference type="InterPro" id="IPR003996">
    <property type="entry name" value="RTX_toxin-activating_protC_bac"/>
</dbReference>
<dbReference type="Pfam" id="PF02794">
    <property type="entry name" value="HlyC"/>
    <property type="match status" value="1"/>
</dbReference>
<dbReference type="PRINTS" id="PR01489">
    <property type="entry name" value="RTXTOXINC"/>
</dbReference>
<keyword id="KW-0012">Acyltransferase</keyword>
<keyword id="KW-0204">Cytolysis</keyword>
<keyword id="KW-0963">Cytoplasm</keyword>
<keyword id="KW-0354">Hemolysis</keyword>
<keyword id="KW-0808">Transferase</keyword>
<feature type="chain" id="PRO_0000217884" description="RTX-II toxin-activating lysine-acyltransferase ApxIIC">
    <location>
        <begin position="1"/>
        <end position="160"/>
    </location>
</feature>
<feature type="active site" evidence="1">
    <location>
        <position position="23"/>
    </location>
</feature>
<feature type="active site" evidence="1">
    <location>
        <position position="92"/>
    </location>
</feature>
<feature type="sequence variant" description="In strain: Serotype 5.">
    <location>
        <position position="6"/>
    </location>
</feature>
<feature type="sequence variant" description="In strain: Serotype 5.">
    <original>QYLLL</original>
    <variation>PIFVT</variation>
    <location>
        <begin position="43"/>
        <end position="47"/>
    </location>
</feature>
<feature type="sequence variant" description="In strain: Serotype 5.">
    <original>WA</original>
    <variation>SR</variation>
    <location>
        <begin position="59"/>
        <end position="60"/>
    </location>
</feature>
<reference key="1">
    <citation type="journal article" date="1989" name="DNA">
        <title>Cloning and characterization of a hemolysin gene from Actinobacillus (Haemophilus) pleuropneumoniae.</title>
        <authorList>
            <person name="Chang Y.-F."/>
            <person name="Young R."/>
            <person name="Struck D.K."/>
        </authorList>
    </citation>
    <scope>NUCLEOTIDE SEQUENCE [GENOMIC DNA]</scope>
    <source>
        <strain>Serotype 5</strain>
    </source>
</reference>
<reference key="2">
    <citation type="journal article" date="1991" name="Infect. Immun.">
        <title>Cytolysins of Actinobacillus pleuropneumoniae serotype 9.</title>
        <authorList>
            <person name="Smits M.A."/>
            <person name="Briaire J."/>
            <person name="Jansen R."/>
            <person name="Smith H.E."/>
            <person name="Kamp E.M."/>
            <person name="Gielkens A.L.J."/>
        </authorList>
    </citation>
    <scope>NUCLEOTIDE SEQUENCE [GENOMIC DNA]</scope>
    <source>
        <strain>Isolate CVI 13261 / Serotype 9</strain>
    </source>
</reference>
<accession>P0A3I3</accession>
<accession>P15376</accession>
<accession>P55119</accession>
<gene>
    <name type="primary">apxIIC</name>
    <name type="synonym">appC</name>
    <name type="synonym">ashC</name>
    <name type="synonym">clyIIC</name>
    <name type="synonym">cytC</name>
    <name type="synonym">hlyC</name>
</gene>
<protein>
    <recommendedName>
        <fullName>RTX-II toxin-activating lysine-acyltransferase ApxIIC</fullName>
        <ecNumber evidence="1">2.3.1.-</ecNumber>
    </recommendedName>
    <alternativeName>
        <fullName>APX-IIC</fullName>
    </alternativeName>
    <alternativeName>
        <fullName>Cytolysin IIC</fullName>
        <shortName>CLY-IIC</shortName>
    </alternativeName>
    <alternativeName>
        <fullName>HLY-IIC</fullName>
    </alternativeName>
    <alternativeName>
        <fullName>RTX-II toxin determinant C</fullName>
    </alternativeName>
    <alternativeName>
        <fullName>Toxin RTX-II-activating protein C</fullName>
    </alternativeName>
</protein>
<evidence type="ECO:0000250" key="1">
    <source>
        <dbReference type="UniProtKB" id="P55132"/>
    </source>
</evidence>
<evidence type="ECO:0000305" key="2"/>
<comment type="function">
    <text evidence="1">Protein-lysine acyltransferase that catalyzes fatty acylation of the protoxin, thereby converting it to the active toxin.</text>
</comment>
<comment type="catalytic activity">
    <reaction evidence="1">
        <text>a fatty acyl-[ACP] + L-lysyl-[protein] = N(6)-(fatty acyl)-L-lysyl-[protein] + holo-[ACP] + H(+)</text>
        <dbReference type="Rhea" id="RHEA:70667"/>
        <dbReference type="Rhea" id="RHEA-COMP:9685"/>
        <dbReference type="Rhea" id="RHEA-COMP:9752"/>
        <dbReference type="Rhea" id="RHEA-COMP:14125"/>
        <dbReference type="Rhea" id="RHEA-COMP:17946"/>
        <dbReference type="ChEBI" id="CHEBI:15378"/>
        <dbReference type="ChEBI" id="CHEBI:29969"/>
        <dbReference type="ChEBI" id="CHEBI:64479"/>
        <dbReference type="ChEBI" id="CHEBI:138651"/>
        <dbReference type="ChEBI" id="CHEBI:189854"/>
    </reaction>
    <physiologicalReaction direction="left-to-right" evidence="1">
        <dbReference type="Rhea" id="RHEA:70668"/>
    </physiologicalReaction>
</comment>
<comment type="subunit">
    <text evidence="1">Homodimer.</text>
</comment>
<comment type="subcellular location">
    <subcellularLocation>
        <location evidence="2">Cytoplasm</location>
    </subcellularLocation>
</comment>
<comment type="similarity">
    <text evidence="2">Belongs to the RTX toxin acyltransferase family.</text>
</comment>
<comment type="sequence caution" evidence="2">
    <conflict type="erroneous initiation">
        <sequence resource="EMBL-CDS" id="CAA43422"/>
    </conflict>
</comment>
<name>RTX2C_ACTPL</name>